<dbReference type="EMBL" id="CP001154">
    <property type="protein sequence ID" value="ACO73253.1"/>
    <property type="molecule type" value="Genomic_DNA"/>
</dbReference>
<dbReference type="RefSeq" id="WP_012695747.1">
    <property type="nucleotide sequence ID" value="NC_012559.1"/>
</dbReference>
<dbReference type="SMR" id="C1DAS2"/>
<dbReference type="STRING" id="557598.LHK_00258"/>
<dbReference type="GeneID" id="75109502"/>
<dbReference type="KEGG" id="lhk:LHK_00258"/>
<dbReference type="eggNOG" id="COG0091">
    <property type="taxonomic scope" value="Bacteria"/>
</dbReference>
<dbReference type="HOGENOM" id="CLU_083987_3_3_4"/>
<dbReference type="Proteomes" id="UP000002010">
    <property type="component" value="Chromosome"/>
</dbReference>
<dbReference type="GO" id="GO:0022625">
    <property type="term" value="C:cytosolic large ribosomal subunit"/>
    <property type="evidence" value="ECO:0007669"/>
    <property type="project" value="TreeGrafter"/>
</dbReference>
<dbReference type="GO" id="GO:0019843">
    <property type="term" value="F:rRNA binding"/>
    <property type="evidence" value="ECO:0007669"/>
    <property type="project" value="UniProtKB-UniRule"/>
</dbReference>
<dbReference type="GO" id="GO:0003735">
    <property type="term" value="F:structural constituent of ribosome"/>
    <property type="evidence" value="ECO:0007669"/>
    <property type="project" value="InterPro"/>
</dbReference>
<dbReference type="GO" id="GO:0006412">
    <property type="term" value="P:translation"/>
    <property type="evidence" value="ECO:0007669"/>
    <property type="project" value="UniProtKB-UniRule"/>
</dbReference>
<dbReference type="CDD" id="cd00336">
    <property type="entry name" value="Ribosomal_L22"/>
    <property type="match status" value="1"/>
</dbReference>
<dbReference type="FunFam" id="3.90.470.10:FF:000001">
    <property type="entry name" value="50S ribosomal protein L22"/>
    <property type="match status" value="1"/>
</dbReference>
<dbReference type="Gene3D" id="3.90.470.10">
    <property type="entry name" value="Ribosomal protein L22/L17"/>
    <property type="match status" value="1"/>
</dbReference>
<dbReference type="HAMAP" id="MF_01331_B">
    <property type="entry name" value="Ribosomal_uL22_B"/>
    <property type="match status" value="1"/>
</dbReference>
<dbReference type="InterPro" id="IPR001063">
    <property type="entry name" value="Ribosomal_uL22"/>
</dbReference>
<dbReference type="InterPro" id="IPR005727">
    <property type="entry name" value="Ribosomal_uL22_bac/chlpt-type"/>
</dbReference>
<dbReference type="InterPro" id="IPR047867">
    <property type="entry name" value="Ribosomal_uL22_bac/org-type"/>
</dbReference>
<dbReference type="InterPro" id="IPR018260">
    <property type="entry name" value="Ribosomal_uL22_CS"/>
</dbReference>
<dbReference type="InterPro" id="IPR036394">
    <property type="entry name" value="Ribosomal_uL22_sf"/>
</dbReference>
<dbReference type="NCBIfam" id="TIGR01044">
    <property type="entry name" value="rplV_bact"/>
    <property type="match status" value="1"/>
</dbReference>
<dbReference type="PANTHER" id="PTHR13501">
    <property type="entry name" value="CHLOROPLAST 50S RIBOSOMAL PROTEIN L22-RELATED"/>
    <property type="match status" value="1"/>
</dbReference>
<dbReference type="PANTHER" id="PTHR13501:SF8">
    <property type="entry name" value="LARGE RIBOSOMAL SUBUNIT PROTEIN UL22M"/>
    <property type="match status" value="1"/>
</dbReference>
<dbReference type="Pfam" id="PF00237">
    <property type="entry name" value="Ribosomal_L22"/>
    <property type="match status" value="1"/>
</dbReference>
<dbReference type="SUPFAM" id="SSF54843">
    <property type="entry name" value="Ribosomal protein L22"/>
    <property type="match status" value="1"/>
</dbReference>
<dbReference type="PROSITE" id="PS00464">
    <property type="entry name" value="RIBOSOMAL_L22"/>
    <property type="match status" value="1"/>
</dbReference>
<name>RL22_LARHH</name>
<evidence type="ECO:0000255" key="1">
    <source>
        <dbReference type="HAMAP-Rule" id="MF_01331"/>
    </source>
</evidence>
<evidence type="ECO:0000305" key="2"/>
<sequence length="109" mass="11800">MKVSAVLKNARVSAQKARLVADLIRGKSVEQALNTLTFTPKKSAVLMKKVLESAIANAEHNEGADIDTLKVATVYVDKGPSLKRFTARAKGRGNRIEKQTCHITLVVGN</sequence>
<comment type="function">
    <text evidence="1">This protein binds specifically to 23S rRNA; its binding is stimulated by other ribosomal proteins, e.g. L4, L17, and L20. It is important during the early stages of 50S assembly. It makes multiple contacts with different domains of the 23S rRNA in the assembled 50S subunit and ribosome (By similarity).</text>
</comment>
<comment type="function">
    <text evidence="1">The globular domain of the protein is located near the polypeptide exit tunnel on the outside of the subunit, while an extended beta-hairpin is found that lines the wall of the exit tunnel in the center of the 70S ribosome.</text>
</comment>
<comment type="subunit">
    <text evidence="1">Part of the 50S ribosomal subunit.</text>
</comment>
<comment type="similarity">
    <text evidence="1">Belongs to the universal ribosomal protein uL22 family.</text>
</comment>
<keyword id="KW-1185">Reference proteome</keyword>
<keyword id="KW-0687">Ribonucleoprotein</keyword>
<keyword id="KW-0689">Ribosomal protein</keyword>
<keyword id="KW-0694">RNA-binding</keyword>
<keyword id="KW-0699">rRNA-binding</keyword>
<accession>C1DAS2</accession>
<feature type="chain" id="PRO_1000166067" description="Large ribosomal subunit protein uL22">
    <location>
        <begin position="1"/>
        <end position="109"/>
    </location>
</feature>
<proteinExistence type="inferred from homology"/>
<organism>
    <name type="scientific">Laribacter hongkongensis (strain HLHK9)</name>
    <dbReference type="NCBI Taxonomy" id="557598"/>
    <lineage>
        <taxon>Bacteria</taxon>
        <taxon>Pseudomonadati</taxon>
        <taxon>Pseudomonadota</taxon>
        <taxon>Betaproteobacteria</taxon>
        <taxon>Neisseriales</taxon>
        <taxon>Aquaspirillaceae</taxon>
        <taxon>Laribacter</taxon>
    </lineage>
</organism>
<gene>
    <name evidence="1" type="primary">rplV</name>
    <name type="ordered locus">LHK_00258</name>
</gene>
<protein>
    <recommendedName>
        <fullName evidence="1">Large ribosomal subunit protein uL22</fullName>
    </recommendedName>
    <alternativeName>
        <fullName evidence="2">50S ribosomal protein L22</fullName>
    </alternativeName>
</protein>
<reference key="1">
    <citation type="journal article" date="2009" name="PLoS Genet.">
        <title>The complete genome and proteome of Laribacter hongkongensis reveal potential mechanisms for adaptations to different temperatures and habitats.</title>
        <authorList>
            <person name="Woo P.C.Y."/>
            <person name="Lau S.K.P."/>
            <person name="Tse H."/>
            <person name="Teng J.L.L."/>
            <person name="Curreem S.O."/>
            <person name="Tsang A.K.L."/>
            <person name="Fan R.Y.Y."/>
            <person name="Wong G.K.M."/>
            <person name="Huang Y."/>
            <person name="Loman N.J."/>
            <person name="Snyder L.A.S."/>
            <person name="Cai J.J."/>
            <person name="Huang J.-D."/>
            <person name="Mak W."/>
            <person name="Pallen M.J."/>
            <person name="Lok S."/>
            <person name="Yuen K.-Y."/>
        </authorList>
    </citation>
    <scope>NUCLEOTIDE SEQUENCE [LARGE SCALE GENOMIC DNA]</scope>
    <source>
        <strain>HLHK9</strain>
    </source>
</reference>